<keyword id="KW-0064">Aspartyl protease</keyword>
<keyword id="KW-0903">Direct protein sequencing</keyword>
<keyword id="KW-1015">Disulfide bond</keyword>
<keyword id="KW-0325">Glycoprotein</keyword>
<keyword id="KW-0378">Hydrolase</keyword>
<keyword id="KW-0645">Protease</keyword>
<keyword id="KW-1185">Reference proteome</keyword>
<keyword id="KW-0964">Secreted</keyword>
<keyword id="KW-0732">Signal</keyword>
<dbReference type="EC" id="3.4.23.-"/>
<dbReference type="EMBL" id="U94792">
    <property type="protein sequence ID" value="AAB53227.1"/>
    <property type="molecule type" value="mRNA"/>
</dbReference>
<dbReference type="RefSeq" id="NP_001009354.1">
    <property type="nucleotide sequence ID" value="NM_001009354.1"/>
</dbReference>
<dbReference type="SMR" id="P83493"/>
<dbReference type="STRING" id="9940.ENSOARP00000012107"/>
<dbReference type="MEROPS" id="A01.089"/>
<dbReference type="PaxDb" id="9940-ENSOARP00000012107"/>
<dbReference type="GeneID" id="443377"/>
<dbReference type="KEGG" id="oas:443377"/>
<dbReference type="CTD" id="337900"/>
<dbReference type="eggNOG" id="KOG1339">
    <property type="taxonomic scope" value="Eukaryota"/>
</dbReference>
<dbReference type="OrthoDB" id="771136at2759"/>
<dbReference type="Proteomes" id="UP000002356">
    <property type="component" value="Unplaced"/>
</dbReference>
<dbReference type="GO" id="GO:0005576">
    <property type="term" value="C:extracellular region"/>
    <property type="evidence" value="ECO:0007669"/>
    <property type="project" value="UniProtKB-SubCell"/>
</dbReference>
<dbReference type="GO" id="GO:0004190">
    <property type="term" value="F:aspartic-type endopeptidase activity"/>
    <property type="evidence" value="ECO:0007669"/>
    <property type="project" value="UniProtKB-KW"/>
</dbReference>
<dbReference type="GO" id="GO:0006508">
    <property type="term" value="P:proteolysis"/>
    <property type="evidence" value="ECO:0007669"/>
    <property type="project" value="UniProtKB-KW"/>
</dbReference>
<dbReference type="FunFam" id="2.40.70.10:FF:000006">
    <property type="entry name" value="Cathepsin E"/>
    <property type="match status" value="1"/>
</dbReference>
<dbReference type="FunFam" id="2.40.70.10:FF:000004">
    <property type="entry name" value="Pepsin A"/>
    <property type="match status" value="1"/>
</dbReference>
<dbReference type="Gene3D" id="6.10.140.60">
    <property type="match status" value="1"/>
</dbReference>
<dbReference type="Gene3D" id="2.40.70.10">
    <property type="entry name" value="Acid Proteases"/>
    <property type="match status" value="2"/>
</dbReference>
<dbReference type="InterPro" id="IPR001461">
    <property type="entry name" value="Aspartic_peptidase_A1"/>
</dbReference>
<dbReference type="InterPro" id="IPR001969">
    <property type="entry name" value="Aspartic_peptidase_AS"/>
</dbReference>
<dbReference type="InterPro" id="IPR012848">
    <property type="entry name" value="Aspartic_peptidase_N"/>
</dbReference>
<dbReference type="InterPro" id="IPR033121">
    <property type="entry name" value="PEPTIDASE_A1"/>
</dbReference>
<dbReference type="InterPro" id="IPR021109">
    <property type="entry name" value="Peptidase_aspartic_dom_sf"/>
</dbReference>
<dbReference type="PANTHER" id="PTHR47966">
    <property type="entry name" value="BETA-SITE APP-CLEAVING ENZYME, ISOFORM A-RELATED"/>
    <property type="match status" value="1"/>
</dbReference>
<dbReference type="PANTHER" id="PTHR47966:SF49">
    <property type="entry name" value="PEPSIN A-5"/>
    <property type="match status" value="1"/>
</dbReference>
<dbReference type="Pfam" id="PF07966">
    <property type="entry name" value="A1_Propeptide"/>
    <property type="match status" value="1"/>
</dbReference>
<dbReference type="Pfam" id="PF00026">
    <property type="entry name" value="Asp"/>
    <property type="match status" value="1"/>
</dbReference>
<dbReference type="PRINTS" id="PR00792">
    <property type="entry name" value="PEPSIN"/>
</dbReference>
<dbReference type="SUPFAM" id="SSF50630">
    <property type="entry name" value="Acid proteases"/>
    <property type="match status" value="1"/>
</dbReference>
<dbReference type="PROSITE" id="PS00141">
    <property type="entry name" value="ASP_PROTEASE"/>
    <property type="match status" value="1"/>
</dbReference>
<dbReference type="PROSITE" id="PS51767">
    <property type="entry name" value="PEPTIDASE_A1"/>
    <property type="match status" value="1"/>
</dbReference>
<proteinExistence type="evidence at protein level"/>
<accession>P83493</accession>
<accession>O02726</accession>
<accession>P83498</accession>
<sequence>MKWLVLLGLVSISECIVKIPLRRVKTMRKTLSEKNMLNNFLKEHAYRLSQISFRGSNLTIHPLRNTKDLVYLGNITIGTPPQEFQVVSDTGSSDLWVPSDFCAIEACSLHTRFRHLQSSTFRPTNRTFSITYGCGTVKGVVVHDTVRIGDLVSTDQPFGLSTAEHVSRCTPFDGVLGLNYPSISFWSTIPIFDKLKNEGAISEPVFAFYLSKDGQEGSVVMFGGVDHRYYKGELNWVPLIPAGNWMVHMDRIYIERNVIACSAGCKAVVDTGAAFIEGPKSQVDNMQKFIGARPRGSKYYVPCSVVNTLPSIIFRINSINYPVPGRAYILKNHRGRCYTTFKENQWSPSTEIWILGDVFLRLYFSVFDRGHDRIGLARAV</sequence>
<name>PAG6_SHEEP</name>
<organism>
    <name type="scientific">Ovis aries</name>
    <name type="common">Sheep</name>
    <dbReference type="NCBI Taxonomy" id="9940"/>
    <lineage>
        <taxon>Eukaryota</taxon>
        <taxon>Metazoa</taxon>
        <taxon>Chordata</taxon>
        <taxon>Craniata</taxon>
        <taxon>Vertebrata</taxon>
        <taxon>Euteleostomi</taxon>
        <taxon>Mammalia</taxon>
        <taxon>Eutheria</taxon>
        <taxon>Laurasiatheria</taxon>
        <taxon>Artiodactyla</taxon>
        <taxon>Ruminantia</taxon>
        <taxon>Pecora</taxon>
        <taxon>Bovidae</taxon>
        <taxon>Caprinae</taxon>
        <taxon>Ovis</taxon>
    </lineage>
</organism>
<evidence type="ECO:0000250" key="1"/>
<evidence type="ECO:0000255" key="2"/>
<evidence type="ECO:0000255" key="3">
    <source>
        <dbReference type="PROSITE-ProRule" id="PRU01103"/>
    </source>
</evidence>
<evidence type="ECO:0000255" key="4">
    <source>
        <dbReference type="PROSITE-ProRule" id="PRU10094"/>
    </source>
</evidence>
<evidence type="ECO:0000269" key="5">
    <source>
    </source>
</evidence>
<evidence type="ECO:0000269" key="6">
    <source>
    </source>
</evidence>
<evidence type="ECO:0000269" key="7">
    <source>
    </source>
</evidence>
<evidence type="ECO:0000269" key="8">
    <source>
    </source>
</evidence>
<evidence type="ECO:0000305" key="9"/>
<protein>
    <recommendedName>
        <fullName>Pregnancy-associated glycoprotein 6</fullName>
        <shortName>ovPAG6</shortName>
        <ecNumber>3.4.23.-</ecNumber>
    </recommendedName>
    <alternativeName>
        <fullName>Pregnancy-associated glycoprotein 58a</fullName>
        <shortName>ovPAG 58a</shortName>
    </alternativeName>
</protein>
<comment type="subcellular location">
    <subcellularLocation>
        <location evidence="8">Secreted</location>
        <location evidence="8">Extracellular space</location>
    </subcellularLocation>
</comment>
<comment type="tissue specificity">
    <text evidence="5 6 7 8">Trophoblast and placental tissue. Produced specifically in the invasive binucleate cells of the placenta.</text>
</comment>
<comment type="developmental stage">
    <text evidence="5 6 8">Highly expressed in the placenta between day 60 and day 100 of gestation.</text>
</comment>
<comment type="similarity">
    <text evidence="9">Belongs to the peptidase A1 family.</text>
</comment>
<reference key="1">
    <citation type="journal article" date="1997" name="Biol. Reprod.">
        <title>Multiple pregnancy-associated glycoproteins are secreted by day 100 ovine placental tissue.</title>
        <authorList>
            <person name="Xie S."/>
            <person name="Green J."/>
            <person name="Bao B."/>
            <person name="Beckers J.F."/>
            <person name="Valdez K.E."/>
            <person name="Hakami L."/>
            <person name="Roberts R.M."/>
        </authorList>
    </citation>
    <scope>NUCLEOTIDE SEQUENCE [MRNA]</scope>
    <scope>SUBCELLULAR LOCATION</scope>
    <scope>TISSUE SPECIFICITY</scope>
    <scope>DEVELOPMENTAL STAGE</scope>
    <source>
        <tissue>Placenta</tissue>
    </source>
</reference>
<reference key="2">
    <citation type="journal article" date="1997" name="Proc. Natl. Acad. Sci. U.S.A.">
        <title>The diversity and evolutionary relationships of the pregnancy-associated glycoproteins, an aspartic proteinase subfamily consisting of many trophoblast-expressed genes.</title>
        <authorList>
            <person name="Xie S."/>
            <person name="Green J."/>
            <person name="Bixby J.B."/>
            <person name="Szafranska B."/>
            <person name="DeMartini J.C."/>
            <person name="Hecht S."/>
            <person name="Roberts R.M."/>
        </authorList>
    </citation>
    <scope>NUCLEOTIDE SEQUENCE [MRNA]</scope>
    <scope>TISSUE SPECIFICITY</scope>
    <source>
        <tissue>Placenta</tissue>
    </source>
</reference>
<reference evidence="9" key="3">
    <citation type="journal article" date="2004" name="Reprod. Nutr. Dev.">
        <title>Isolation and characterization of eight pregnancy-associated glycoproteins present at high levels in the ovine placenta between day 60 and day 100 of gestation.</title>
        <authorList>
            <person name="El Amiri B."/>
            <person name="Remy B."/>
            <person name="De Sousa N.M."/>
            <person name="Beckers J.F."/>
        </authorList>
    </citation>
    <scope>PROTEIN SEQUENCE OF 54-73</scope>
    <scope>TISSUE SPECIFICITY</scope>
    <scope>DEVELOPMENTAL STAGE</scope>
    <source>
        <tissue evidence="6">Fetal cotyledon</tissue>
    </source>
</reference>
<reference key="4">
    <citation type="journal article" date="2000" name="Biol. Reprod.">
        <title>Pregnancy-associated bovine and ovine glycoproteins exhibit spatially and temporally distinct expression patterns during pregnancy.</title>
        <authorList>
            <person name="Green J.A."/>
            <person name="Xie S."/>
            <person name="Quan X."/>
            <person name="Bao B."/>
            <person name="Gan X."/>
            <person name="Mathialagan N."/>
            <person name="Beckers J.F."/>
            <person name="Roberts R.M."/>
        </authorList>
    </citation>
    <scope>TISSUE SPECIFICITY</scope>
    <scope>DEVELOPMENTAL STAGE</scope>
</reference>
<feature type="signal peptide" evidence="2">
    <location>
        <begin position="1"/>
        <end position="15"/>
    </location>
</feature>
<feature type="propeptide" id="PRO_0000425539" description="Activation peptide" evidence="6">
    <location>
        <begin position="16"/>
        <end position="53"/>
    </location>
</feature>
<feature type="chain" id="PRO_0000199522" description="Pregnancy-associated glycoprotein 6">
    <location>
        <begin position="54"/>
        <end position="380"/>
    </location>
</feature>
<feature type="domain" description="Peptidase A1" evidence="3">
    <location>
        <begin position="71"/>
        <end position="377"/>
    </location>
</feature>
<feature type="active site" evidence="4">
    <location>
        <position position="89"/>
    </location>
</feature>
<feature type="active site" evidence="4">
    <location>
        <position position="270"/>
    </location>
</feature>
<feature type="glycosylation site" description="N-linked (GlcNAc...) asparagine" evidence="2">
    <location>
        <position position="57"/>
    </location>
</feature>
<feature type="glycosylation site" description="N-linked (GlcNAc...) asparagine" evidence="2">
    <location>
        <position position="74"/>
    </location>
</feature>
<feature type="glycosylation site" description="N-linked (GlcNAc...) asparagine" evidence="2">
    <location>
        <position position="125"/>
    </location>
</feature>
<feature type="disulfide bond" evidence="1">
    <location>
        <begin position="102"/>
        <end position="107"/>
    </location>
</feature>
<feature type="disulfide bond" evidence="1">
    <location>
        <begin position="261"/>
        <end position="265"/>
    </location>
</feature>
<feature type="disulfide bond" evidence="1">
    <location>
        <begin position="303"/>
        <end position="337"/>
    </location>
</feature>